<organism>
    <name type="scientific">Pectobacterium atrosepticum (strain SCRI 1043 / ATCC BAA-672)</name>
    <name type="common">Erwinia carotovora subsp. atroseptica</name>
    <dbReference type="NCBI Taxonomy" id="218491"/>
    <lineage>
        <taxon>Bacteria</taxon>
        <taxon>Pseudomonadati</taxon>
        <taxon>Pseudomonadota</taxon>
        <taxon>Gammaproteobacteria</taxon>
        <taxon>Enterobacterales</taxon>
        <taxon>Pectobacteriaceae</taxon>
        <taxon>Pectobacterium</taxon>
    </lineage>
</organism>
<accession>Q6CZQ9</accession>
<proteinExistence type="inferred from homology"/>
<evidence type="ECO:0000255" key="1">
    <source>
        <dbReference type="HAMAP-Rule" id="MF_00110"/>
    </source>
</evidence>
<reference key="1">
    <citation type="journal article" date="2004" name="Proc. Natl. Acad. Sci. U.S.A.">
        <title>Genome sequence of the enterobacterial phytopathogen Erwinia carotovora subsp. atroseptica and characterization of virulence factors.</title>
        <authorList>
            <person name="Bell K.S."/>
            <person name="Sebaihia M."/>
            <person name="Pritchard L."/>
            <person name="Holden M.T.G."/>
            <person name="Hyman L.J."/>
            <person name="Holeva M.C."/>
            <person name="Thomson N.R."/>
            <person name="Bentley S.D."/>
            <person name="Churcher L.J.C."/>
            <person name="Mungall K."/>
            <person name="Atkin R."/>
            <person name="Bason N."/>
            <person name="Brooks K."/>
            <person name="Chillingworth T."/>
            <person name="Clark K."/>
            <person name="Doggett J."/>
            <person name="Fraser A."/>
            <person name="Hance Z."/>
            <person name="Hauser H."/>
            <person name="Jagels K."/>
            <person name="Moule S."/>
            <person name="Norbertczak H."/>
            <person name="Ormond D."/>
            <person name="Price C."/>
            <person name="Quail M.A."/>
            <person name="Sanders M."/>
            <person name="Walker D."/>
            <person name="Whitehead S."/>
            <person name="Salmond G.P.C."/>
            <person name="Birch P.R.J."/>
            <person name="Parkhill J."/>
            <person name="Toth I.K."/>
        </authorList>
    </citation>
    <scope>NUCLEOTIDE SEQUENCE [LARGE SCALE GENOMIC DNA]</scope>
    <source>
        <strain>SCRI 1043 / ATCC BAA-672</strain>
    </source>
</reference>
<name>AROB_PECAS</name>
<feature type="chain" id="PRO_0000231086" description="3-dehydroquinate synthase">
    <location>
        <begin position="1"/>
        <end position="361"/>
    </location>
</feature>
<feature type="binding site" evidence="1">
    <location>
        <begin position="71"/>
        <end position="76"/>
    </location>
    <ligand>
        <name>NAD(+)</name>
        <dbReference type="ChEBI" id="CHEBI:57540"/>
    </ligand>
</feature>
<feature type="binding site" evidence="1">
    <location>
        <begin position="105"/>
        <end position="109"/>
    </location>
    <ligand>
        <name>NAD(+)</name>
        <dbReference type="ChEBI" id="CHEBI:57540"/>
    </ligand>
</feature>
<feature type="binding site" evidence="1">
    <location>
        <begin position="129"/>
        <end position="130"/>
    </location>
    <ligand>
        <name>NAD(+)</name>
        <dbReference type="ChEBI" id="CHEBI:57540"/>
    </ligand>
</feature>
<feature type="binding site" evidence="1">
    <location>
        <position position="142"/>
    </location>
    <ligand>
        <name>NAD(+)</name>
        <dbReference type="ChEBI" id="CHEBI:57540"/>
    </ligand>
</feature>
<feature type="binding site" evidence="1">
    <location>
        <position position="151"/>
    </location>
    <ligand>
        <name>NAD(+)</name>
        <dbReference type="ChEBI" id="CHEBI:57540"/>
    </ligand>
</feature>
<feature type="binding site" evidence="1">
    <location>
        <position position="184"/>
    </location>
    <ligand>
        <name>Zn(2+)</name>
        <dbReference type="ChEBI" id="CHEBI:29105"/>
    </ligand>
</feature>
<feature type="binding site" evidence="1">
    <location>
        <position position="247"/>
    </location>
    <ligand>
        <name>Zn(2+)</name>
        <dbReference type="ChEBI" id="CHEBI:29105"/>
    </ligand>
</feature>
<feature type="binding site" evidence="1">
    <location>
        <position position="264"/>
    </location>
    <ligand>
        <name>Zn(2+)</name>
        <dbReference type="ChEBI" id="CHEBI:29105"/>
    </ligand>
</feature>
<protein>
    <recommendedName>
        <fullName evidence="1">3-dehydroquinate synthase</fullName>
        <shortName evidence="1">DHQS</shortName>
        <ecNumber evidence="1">4.2.3.4</ecNumber>
    </recommendedName>
</protein>
<keyword id="KW-0028">Amino-acid biosynthesis</keyword>
<keyword id="KW-0057">Aromatic amino acid biosynthesis</keyword>
<keyword id="KW-0170">Cobalt</keyword>
<keyword id="KW-0963">Cytoplasm</keyword>
<keyword id="KW-0456">Lyase</keyword>
<keyword id="KW-0479">Metal-binding</keyword>
<keyword id="KW-0520">NAD</keyword>
<keyword id="KW-0547">Nucleotide-binding</keyword>
<keyword id="KW-1185">Reference proteome</keyword>
<keyword id="KW-0862">Zinc</keyword>
<sequence>MERITVTLGERSYPITIAAGLFDDPASFMPLKAGDQAMLVTNQTLAPLYLDCVRGVLENHGVHVDQVILPDGEQYKSLTVLDQVFTALLAKPHGRDTTIVALGGGVIGDLAGFAAASYQRGVRFLQVPTTLLSQVDSSVGGKTAVNHPLGKNMIGAFYQPVSVVIDLDCLKSLPARELSSGLAEVIKYGIILDRDFFLWLEENIEAVRELQHDALAYCIRRCCEIKAAVVAADERENSMRALLNLGHTYGHAIEAEMGYGNWLHGEAVAAGMVMAAHTARRLGQFSDSDVERVKSLLVRAGLPVNGPTQMTPESYLPHMMRDKKVLAGELRLVLPTAIGQSEVRGGVAHDMVLASIADCLA</sequence>
<dbReference type="EC" id="4.2.3.4" evidence="1"/>
<dbReference type="EMBL" id="BX950851">
    <property type="protein sequence ID" value="CAG76989.1"/>
    <property type="molecule type" value="Genomic_DNA"/>
</dbReference>
<dbReference type="RefSeq" id="WP_011095566.1">
    <property type="nucleotide sequence ID" value="NC_004547.2"/>
</dbReference>
<dbReference type="SMR" id="Q6CZQ9"/>
<dbReference type="STRING" id="218491.ECA4092"/>
<dbReference type="KEGG" id="eca:ECA4092"/>
<dbReference type="PATRIC" id="fig|218491.5.peg.4162"/>
<dbReference type="eggNOG" id="COG0337">
    <property type="taxonomic scope" value="Bacteria"/>
</dbReference>
<dbReference type="HOGENOM" id="CLU_001201_0_2_6"/>
<dbReference type="OrthoDB" id="9806583at2"/>
<dbReference type="UniPathway" id="UPA00053">
    <property type="reaction ID" value="UER00085"/>
</dbReference>
<dbReference type="Proteomes" id="UP000007966">
    <property type="component" value="Chromosome"/>
</dbReference>
<dbReference type="GO" id="GO:0005737">
    <property type="term" value="C:cytoplasm"/>
    <property type="evidence" value="ECO:0007669"/>
    <property type="project" value="UniProtKB-SubCell"/>
</dbReference>
<dbReference type="GO" id="GO:0003856">
    <property type="term" value="F:3-dehydroquinate synthase activity"/>
    <property type="evidence" value="ECO:0007669"/>
    <property type="project" value="UniProtKB-UniRule"/>
</dbReference>
<dbReference type="GO" id="GO:0046872">
    <property type="term" value="F:metal ion binding"/>
    <property type="evidence" value="ECO:0007669"/>
    <property type="project" value="UniProtKB-KW"/>
</dbReference>
<dbReference type="GO" id="GO:0000166">
    <property type="term" value="F:nucleotide binding"/>
    <property type="evidence" value="ECO:0007669"/>
    <property type="project" value="UniProtKB-KW"/>
</dbReference>
<dbReference type="GO" id="GO:0008652">
    <property type="term" value="P:amino acid biosynthetic process"/>
    <property type="evidence" value="ECO:0007669"/>
    <property type="project" value="UniProtKB-KW"/>
</dbReference>
<dbReference type="GO" id="GO:0009073">
    <property type="term" value="P:aromatic amino acid family biosynthetic process"/>
    <property type="evidence" value="ECO:0007669"/>
    <property type="project" value="UniProtKB-KW"/>
</dbReference>
<dbReference type="GO" id="GO:0009423">
    <property type="term" value="P:chorismate biosynthetic process"/>
    <property type="evidence" value="ECO:0007669"/>
    <property type="project" value="UniProtKB-UniRule"/>
</dbReference>
<dbReference type="CDD" id="cd08195">
    <property type="entry name" value="DHQS"/>
    <property type="match status" value="1"/>
</dbReference>
<dbReference type="FunFam" id="1.20.1090.10:FF:000002">
    <property type="entry name" value="3-dehydroquinate synthase"/>
    <property type="match status" value="1"/>
</dbReference>
<dbReference type="FunFam" id="3.40.50.1970:FF:000001">
    <property type="entry name" value="3-dehydroquinate synthase"/>
    <property type="match status" value="1"/>
</dbReference>
<dbReference type="Gene3D" id="3.40.50.1970">
    <property type="match status" value="1"/>
</dbReference>
<dbReference type="Gene3D" id="1.20.1090.10">
    <property type="entry name" value="Dehydroquinate synthase-like - alpha domain"/>
    <property type="match status" value="1"/>
</dbReference>
<dbReference type="HAMAP" id="MF_00110">
    <property type="entry name" value="DHQ_synthase"/>
    <property type="match status" value="1"/>
</dbReference>
<dbReference type="InterPro" id="IPR050071">
    <property type="entry name" value="Dehydroquinate_synthase"/>
</dbReference>
<dbReference type="InterPro" id="IPR016037">
    <property type="entry name" value="DHQ_synth_AroB"/>
</dbReference>
<dbReference type="InterPro" id="IPR030963">
    <property type="entry name" value="DHQ_synth_fam"/>
</dbReference>
<dbReference type="InterPro" id="IPR030960">
    <property type="entry name" value="DHQS/DOIS_N"/>
</dbReference>
<dbReference type="InterPro" id="IPR056179">
    <property type="entry name" value="DHQS_C"/>
</dbReference>
<dbReference type="NCBIfam" id="TIGR01357">
    <property type="entry name" value="aroB"/>
    <property type="match status" value="1"/>
</dbReference>
<dbReference type="PANTHER" id="PTHR43622">
    <property type="entry name" value="3-DEHYDROQUINATE SYNTHASE"/>
    <property type="match status" value="1"/>
</dbReference>
<dbReference type="PANTHER" id="PTHR43622:SF7">
    <property type="entry name" value="3-DEHYDROQUINATE SYNTHASE, CHLOROPLASTIC"/>
    <property type="match status" value="1"/>
</dbReference>
<dbReference type="Pfam" id="PF01761">
    <property type="entry name" value="DHQ_synthase"/>
    <property type="match status" value="1"/>
</dbReference>
<dbReference type="Pfam" id="PF24621">
    <property type="entry name" value="DHQS_C"/>
    <property type="match status" value="1"/>
</dbReference>
<dbReference type="PIRSF" id="PIRSF001455">
    <property type="entry name" value="DHQ_synth"/>
    <property type="match status" value="1"/>
</dbReference>
<dbReference type="SUPFAM" id="SSF56796">
    <property type="entry name" value="Dehydroquinate synthase-like"/>
    <property type="match status" value="1"/>
</dbReference>
<gene>
    <name evidence="1" type="primary">aroB</name>
    <name type="ordered locus">ECA4092</name>
</gene>
<comment type="function">
    <text evidence="1">Catalyzes the conversion of 3-deoxy-D-arabino-heptulosonate 7-phosphate (DAHP) to dehydroquinate (DHQ).</text>
</comment>
<comment type="catalytic activity">
    <reaction evidence="1">
        <text>7-phospho-2-dehydro-3-deoxy-D-arabino-heptonate = 3-dehydroquinate + phosphate</text>
        <dbReference type="Rhea" id="RHEA:21968"/>
        <dbReference type="ChEBI" id="CHEBI:32364"/>
        <dbReference type="ChEBI" id="CHEBI:43474"/>
        <dbReference type="ChEBI" id="CHEBI:58394"/>
        <dbReference type="EC" id="4.2.3.4"/>
    </reaction>
</comment>
<comment type="cofactor">
    <cofactor evidence="1">
        <name>Co(2+)</name>
        <dbReference type="ChEBI" id="CHEBI:48828"/>
    </cofactor>
    <cofactor evidence="1">
        <name>Zn(2+)</name>
        <dbReference type="ChEBI" id="CHEBI:29105"/>
    </cofactor>
    <text evidence="1">Binds 1 divalent metal cation per subunit. Can use either Co(2+) or Zn(2+).</text>
</comment>
<comment type="cofactor">
    <cofactor evidence="1">
        <name>NAD(+)</name>
        <dbReference type="ChEBI" id="CHEBI:57540"/>
    </cofactor>
</comment>
<comment type="pathway">
    <text evidence="1">Metabolic intermediate biosynthesis; chorismate biosynthesis; chorismate from D-erythrose 4-phosphate and phosphoenolpyruvate: step 2/7.</text>
</comment>
<comment type="subcellular location">
    <subcellularLocation>
        <location evidence="1">Cytoplasm</location>
    </subcellularLocation>
</comment>
<comment type="similarity">
    <text evidence="1">Belongs to the sugar phosphate cyclases superfamily. Dehydroquinate synthase family.</text>
</comment>